<sequence>MSREDLEARLRAIGAERYHDKHPFHHKLHGGDCTPDQVRAWVINRWAYQAAIPMKDAAFLSRCADPDIRRAWRSRIEDHDGGVDSGGGLRRWLKLAEAVGLDPDYVASGRGILPATRFAVEAYFHYVREQPLLQAVASSLTELFAPKIHENRIEGLLRHYDFADESSLSYFRKRLSEAPRDVAYGLGWVLDHADTPEKEDMACAALIFKTDVLWAQLDALWGAYVDGHVPPGAWRPGEGMA</sequence>
<protein>
    <recommendedName>
        <fullName evidence="1">Pyrroloquinoline-quinone synthase</fullName>
        <ecNumber evidence="1">1.3.3.11</ecNumber>
    </recommendedName>
    <alternativeName>
        <fullName evidence="1">Coenzyme PQQ synthesis protein C</fullName>
    </alternativeName>
    <alternativeName>
        <fullName evidence="1">Pyrroloquinoline quinone biosynthesis protein C</fullName>
    </alternativeName>
</protein>
<feature type="chain" id="PRO_0000219988" description="Pyrroloquinoline-quinone synthase">
    <location>
        <begin position="1"/>
        <end position="241"/>
    </location>
</feature>
<gene>
    <name evidence="1" type="primary">pqqC</name>
    <name type="ordered locus">SPO1502</name>
</gene>
<keyword id="KW-0560">Oxidoreductase</keyword>
<keyword id="KW-0884">PQQ biosynthesis</keyword>
<keyword id="KW-1185">Reference proteome</keyword>
<comment type="function">
    <text evidence="1">Ring cyclization and eight-electron oxidation of 3a-(2-amino-2-carboxyethyl)-4,5-dioxo-4,5,6,7,8,9-hexahydroquinoline-7,9-dicarboxylic-acid to PQQ.</text>
</comment>
<comment type="catalytic activity">
    <reaction evidence="1">
        <text>6-(2-amino-2-carboxyethyl)-7,8-dioxo-1,2,3,4,7,8-hexahydroquinoline-2,4-dicarboxylate + 3 O2 = pyrroloquinoline quinone + 2 H2O2 + 2 H2O + H(+)</text>
        <dbReference type="Rhea" id="RHEA:10692"/>
        <dbReference type="ChEBI" id="CHEBI:15377"/>
        <dbReference type="ChEBI" id="CHEBI:15378"/>
        <dbReference type="ChEBI" id="CHEBI:15379"/>
        <dbReference type="ChEBI" id="CHEBI:16240"/>
        <dbReference type="ChEBI" id="CHEBI:58442"/>
        <dbReference type="ChEBI" id="CHEBI:58778"/>
        <dbReference type="EC" id="1.3.3.11"/>
    </reaction>
</comment>
<comment type="pathway">
    <text evidence="1">Cofactor biosynthesis; pyrroloquinoline quinone biosynthesis.</text>
</comment>
<comment type="similarity">
    <text evidence="1">Belongs to the PqqC family.</text>
</comment>
<evidence type="ECO:0000255" key="1">
    <source>
        <dbReference type="HAMAP-Rule" id="MF_00654"/>
    </source>
</evidence>
<reference key="1">
    <citation type="journal article" date="2004" name="Nature">
        <title>Genome sequence of Silicibacter pomeroyi reveals adaptations to the marine environment.</title>
        <authorList>
            <person name="Moran M.A."/>
            <person name="Buchan A."/>
            <person name="Gonzalez J.M."/>
            <person name="Heidelberg J.F."/>
            <person name="Whitman W.B."/>
            <person name="Kiene R.P."/>
            <person name="Henriksen J.R."/>
            <person name="King G.M."/>
            <person name="Belas R."/>
            <person name="Fuqua C."/>
            <person name="Brinkac L.M."/>
            <person name="Lewis M."/>
            <person name="Johri S."/>
            <person name="Weaver B."/>
            <person name="Pai G."/>
            <person name="Eisen J.A."/>
            <person name="Rahe E."/>
            <person name="Sheldon W.M."/>
            <person name="Ye W."/>
            <person name="Miller T.R."/>
            <person name="Carlton J."/>
            <person name="Rasko D.A."/>
            <person name="Paulsen I.T."/>
            <person name="Ren Q."/>
            <person name="Daugherty S.C."/>
            <person name="DeBoy R.T."/>
            <person name="Dodson R.J."/>
            <person name="Durkin A.S."/>
            <person name="Madupu R."/>
            <person name="Nelson W.C."/>
            <person name="Sullivan S.A."/>
            <person name="Rosovitz M.J."/>
            <person name="Haft D.H."/>
            <person name="Selengut J."/>
            <person name="Ward N."/>
        </authorList>
    </citation>
    <scope>NUCLEOTIDE SEQUENCE [LARGE SCALE GENOMIC DNA]</scope>
    <source>
        <strain>ATCC 700808 / DSM 15171 / DSS-3</strain>
    </source>
</reference>
<reference key="2">
    <citation type="journal article" date="2014" name="Stand. Genomic Sci.">
        <title>An updated genome annotation for the model marine bacterium Ruegeria pomeroyi DSS-3.</title>
        <authorList>
            <person name="Rivers A.R."/>
            <person name="Smith C.B."/>
            <person name="Moran M.A."/>
        </authorList>
    </citation>
    <scope>GENOME REANNOTATION</scope>
    <source>
        <strain>ATCC 700808 / DSM 15171 / DSS-3</strain>
    </source>
</reference>
<proteinExistence type="inferred from homology"/>
<organism>
    <name type="scientific">Ruegeria pomeroyi (strain ATCC 700808 / DSM 15171 / DSS-3)</name>
    <name type="common">Silicibacter pomeroyi</name>
    <dbReference type="NCBI Taxonomy" id="246200"/>
    <lineage>
        <taxon>Bacteria</taxon>
        <taxon>Pseudomonadati</taxon>
        <taxon>Pseudomonadota</taxon>
        <taxon>Alphaproteobacteria</taxon>
        <taxon>Rhodobacterales</taxon>
        <taxon>Roseobacteraceae</taxon>
        <taxon>Ruegeria</taxon>
    </lineage>
</organism>
<accession>Q5LTB2</accession>
<name>PQQC_RUEPO</name>
<dbReference type="EC" id="1.3.3.11" evidence="1"/>
<dbReference type="EMBL" id="CP000031">
    <property type="protein sequence ID" value="AAV94789.1"/>
    <property type="molecule type" value="Genomic_DNA"/>
</dbReference>
<dbReference type="RefSeq" id="WP_011047239.1">
    <property type="nucleotide sequence ID" value="NC_003911.12"/>
</dbReference>
<dbReference type="SMR" id="Q5LTB2"/>
<dbReference type="STRING" id="246200.SPO1502"/>
<dbReference type="PaxDb" id="246200-SPO1502"/>
<dbReference type="KEGG" id="sil:SPO1502"/>
<dbReference type="eggNOG" id="COG5424">
    <property type="taxonomic scope" value="Bacteria"/>
</dbReference>
<dbReference type="HOGENOM" id="CLU_080136_0_0_5"/>
<dbReference type="OrthoDB" id="9800756at2"/>
<dbReference type="UniPathway" id="UPA00539"/>
<dbReference type="Proteomes" id="UP000001023">
    <property type="component" value="Chromosome"/>
</dbReference>
<dbReference type="GO" id="GO:0033732">
    <property type="term" value="F:pyrroloquinoline-quinone synthase activity"/>
    <property type="evidence" value="ECO:0007669"/>
    <property type="project" value="UniProtKB-EC"/>
</dbReference>
<dbReference type="GO" id="GO:0018189">
    <property type="term" value="P:pyrroloquinoline quinone biosynthetic process"/>
    <property type="evidence" value="ECO:0007669"/>
    <property type="project" value="UniProtKB-UniRule"/>
</dbReference>
<dbReference type="GO" id="GO:0006790">
    <property type="term" value="P:sulfur compound metabolic process"/>
    <property type="evidence" value="ECO:0007669"/>
    <property type="project" value="UniProtKB-ARBA"/>
</dbReference>
<dbReference type="Gene3D" id="1.20.910.10">
    <property type="entry name" value="Heme oxygenase-like"/>
    <property type="match status" value="1"/>
</dbReference>
<dbReference type="HAMAP" id="MF_00654">
    <property type="entry name" value="PQQ_syn_PqqC"/>
    <property type="match status" value="1"/>
</dbReference>
<dbReference type="InterPro" id="IPR016084">
    <property type="entry name" value="Haem_Oase-like_multi-hlx"/>
</dbReference>
<dbReference type="InterPro" id="IPR011845">
    <property type="entry name" value="PqqC"/>
</dbReference>
<dbReference type="InterPro" id="IPR039068">
    <property type="entry name" value="PqqC-like"/>
</dbReference>
<dbReference type="InterPro" id="IPR004305">
    <property type="entry name" value="Thiaminase-2/PQQC"/>
</dbReference>
<dbReference type="NCBIfam" id="TIGR02111">
    <property type="entry name" value="PQQ_syn_pqqC"/>
    <property type="match status" value="1"/>
</dbReference>
<dbReference type="PANTHER" id="PTHR40279:SF3">
    <property type="entry name" value="4-AMINOBENZOATE SYNTHASE"/>
    <property type="match status" value="1"/>
</dbReference>
<dbReference type="PANTHER" id="PTHR40279">
    <property type="entry name" value="PQQC-LIKE PROTEIN"/>
    <property type="match status" value="1"/>
</dbReference>
<dbReference type="Pfam" id="PF03070">
    <property type="entry name" value="TENA_THI-4"/>
    <property type="match status" value="1"/>
</dbReference>
<dbReference type="SUPFAM" id="SSF48613">
    <property type="entry name" value="Heme oxygenase-like"/>
    <property type="match status" value="1"/>
</dbReference>